<name>NADK1_OCEIH</name>
<comment type="function">
    <text evidence="1">Involved in the regulation of the intracellular balance of NAD and NADP, and is a key enzyme in the biosynthesis of NADP. Catalyzes specifically the phosphorylation on 2'-hydroxyl of the adenosine moiety of NAD to yield NADP.</text>
</comment>
<comment type="catalytic activity">
    <reaction evidence="1">
        <text>NAD(+) + ATP = ADP + NADP(+) + H(+)</text>
        <dbReference type="Rhea" id="RHEA:18629"/>
        <dbReference type="ChEBI" id="CHEBI:15378"/>
        <dbReference type="ChEBI" id="CHEBI:30616"/>
        <dbReference type="ChEBI" id="CHEBI:57540"/>
        <dbReference type="ChEBI" id="CHEBI:58349"/>
        <dbReference type="ChEBI" id="CHEBI:456216"/>
        <dbReference type="EC" id="2.7.1.23"/>
    </reaction>
</comment>
<comment type="cofactor">
    <cofactor evidence="1">
        <name>a divalent metal cation</name>
        <dbReference type="ChEBI" id="CHEBI:60240"/>
    </cofactor>
</comment>
<comment type="subcellular location">
    <subcellularLocation>
        <location evidence="1">Cytoplasm</location>
    </subcellularLocation>
</comment>
<comment type="similarity">
    <text evidence="1">Belongs to the NAD kinase family.</text>
</comment>
<proteinExistence type="inferred from homology"/>
<organism>
    <name type="scientific">Oceanobacillus iheyensis (strain DSM 14371 / CIP 107618 / JCM 11309 / KCTC 3954 / HTE831)</name>
    <dbReference type="NCBI Taxonomy" id="221109"/>
    <lineage>
        <taxon>Bacteria</taxon>
        <taxon>Bacillati</taxon>
        <taxon>Bacillota</taxon>
        <taxon>Bacilli</taxon>
        <taxon>Bacillales</taxon>
        <taxon>Bacillaceae</taxon>
        <taxon>Oceanobacillus</taxon>
    </lineage>
</organism>
<feature type="chain" id="PRO_0000120642" description="NAD kinase 1">
    <location>
        <begin position="1"/>
        <end position="267"/>
    </location>
</feature>
<feature type="active site" description="Proton acceptor" evidence="1">
    <location>
        <position position="45"/>
    </location>
</feature>
<feature type="binding site" evidence="1">
    <location>
        <begin position="45"/>
        <end position="46"/>
    </location>
    <ligand>
        <name>NAD(+)</name>
        <dbReference type="ChEBI" id="CHEBI:57540"/>
    </ligand>
</feature>
<feature type="binding site" evidence="1">
    <location>
        <begin position="122"/>
        <end position="123"/>
    </location>
    <ligand>
        <name>NAD(+)</name>
        <dbReference type="ChEBI" id="CHEBI:57540"/>
    </ligand>
</feature>
<feature type="binding site" evidence="1">
    <location>
        <position position="149"/>
    </location>
    <ligand>
        <name>NAD(+)</name>
        <dbReference type="ChEBI" id="CHEBI:57540"/>
    </ligand>
</feature>
<feature type="binding site" evidence="1">
    <location>
        <position position="151"/>
    </location>
    <ligand>
        <name>NAD(+)</name>
        <dbReference type="ChEBI" id="CHEBI:57540"/>
    </ligand>
</feature>
<feature type="binding site" evidence="1">
    <location>
        <position position="186"/>
    </location>
    <ligand>
        <name>NAD(+)</name>
        <dbReference type="ChEBI" id="CHEBI:57540"/>
    </ligand>
</feature>
<gene>
    <name evidence="1" type="primary">nadK1</name>
    <name type="ordered locus">OB1221</name>
</gene>
<accession>Q8ERS9</accession>
<dbReference type="EC" id="2.7.1.23" evidence="1"/>
<dbReference type="EMBL" id="BA000028">
    <property type="protein sequence ID" value="BAC13177.1"/>
    <property type="molecule type" value="Genomic_DNA"/>
</dbReference>
<dbReference type="RefSeq" id="WP_011065620.1">
    <property type="nucleotide sequence ID" value="NC_004193.1"/>
</dbReference>
<dbReference type="SMR" id="Q8ERS9"/>
<dbReference type="STRING" id="221109.gene:10733460"/>
<dbReference type="KEGG" id="oih:OB1221"/>
<dbReference type="eggNOG" id="COG0061">
    <property type="taxonomic scope" value="Bacteria"/>
</dbReference>
<dbReference type="HOGENOM" id="CLU_008831_0_3_9"/>
<dbReference type="OrthoDB" id="9774737at2"/>
<dbReference type="PhylomeDB" id="Q8ERS9"/>
<dbReference type="Proteomes" id="UP000000822">
    <property type="component" value="Chromosome"/>
</dbReference>
<dbReference type="GO" id="GO:0005737">
    <property type="term" value="C:cytoplasm"/>
    <property type="evidence" value="ECO:0007669"/>
    <property type="project" value="UniProtKB-SubCell"/>
</dbReference>
<dbReference type="GO" id="GO:0005524">
    <property type="term" value="F:ATP binding"/>
    <property type="evidence" value="ECO:0007669"/>
    <property type="project" value="UniProtKB-KW"/>
</dbReference>
<dbReference type="GO" id="GO:0046872">
    <property type="term" value="F:metal ion binding"/>
    <property type="evidence" value="ECO:0007669"/>
    <property type="project" value="UniProtKB-UniRule"/>
</dbReference>
<dbReference type="GO" id="GO:0051287">
    <property type="term" value="F:NAD binding"/>
    <property type="evidence" value="ECO:0007669"/>
    <property type="project" value="UniProtKB-ARBA"/>
</dbReference>
<dbReference type="GO" id="GO:0003951">
    <property type="term" value="F:NAD+ kinase activity"/>
    <property type="evidence" value="ECO:0007669"/>
    <property type="project" value="UniProtKB-UniRule"/>
</dbReference>
<dbReference type="GO" id="GO:0019674">
    <property type="term" value="P:NAD metabolic process"/>
    <property type="evidence" value="ECO:0007669"/>
    <property type="project" value="InterPro"/>
</dbReference>
<dbReference type="GO" id="GO:0006741">
    <property type="term" value="P:NADP biosynthetic process"/>
    <property type="evidence" value="ECO:0007669"/>
    <property type="project" value="UniProtKB-UniRule"/>
</dbReference>
<dbReference type="FunFam" id="2.60.200.30:FF:000002">
    <property type="entry name" value="NAD kinase"/>
    <property type="match status" value="1"/>
</dbReference>
<dbReference type="Gene3D" id="3.40.50.10330">
    <property type="entry name" value="Probable inorganic polyphosphate/atp-NAD kinase, domain 1"/>
    <property type="match status" value="1"/>
</dbReference>
<dbReference type="Gene3D" id="2.60.200.30">
    <property type="entry name" value="Probable inorganic polyphosphate/atp-NAD kinase, domain 2"/>
    <property type="match status" value="1"/>
</dbReference>
<dbReference type="HAMAP" id="MF_00361">
    <property type="entry name" value="NAD_kinase"/>
    <property type="match status" value="1"/>
</dbReference>
<dbReference type="InterPro" id="IPR017438">
    <property type="entry name" value="ATP-NAD_kinase_N"/>
</dbReference>
<dbReference type="InterPro" id="IPR017437">
    <property type="entry name" value="ATP-NAD_kinase_PpnK-typ_C"/>
</dbReference>
<dbReference type="InterPro" id="IPR016064">
    <property type="entry name" value="NAD/diacylglycerol_kinase_sf"/>
</dbReference>
<dbReference type="InterPro" id="IPR002504">
    <property type="entry name" value="NADK"/>
</dbReference>
<dbReference type="NCBIfam" id="NF003424">
    <property type="entry name" value="PRK04885.1"/>
    <property type="match status" value="1"/>
</dbReference>
<dbReference type="PANTHER" id="PTHR20275">
    <property type="entry name" value="NAD KINASE"/>
    <property type="match status" value="1"/>
</dbReference>
<dbReference type="PANTHER" id="PTHR20275:SF0">
    <property type="entry name" value="NAD KINASE"/>
    <property type="match status" value="1"/>
</dbReference>
<dbReference type="Pfam" id="PF01513">
    <property type="entry name" value="NAD_kinase"/>
    <property type="match status" value="1"/>
</dbReference>
<dbReference type="Pfam" id="PF20143">
    <property type="entry name" value="NAD_kinase_C"/>
    <property type="match status" value="1"/>
</dbReference>
<dbReference type="SUPFAM" id="SSF111331">
    <property type="entry name" value="NAD kinase/diacylglycerol kinase-like"/>
    <property type="match status" value="1"/>
</dbReference>
<protein>
    <recommendedName>
        <fullName evidence="1">NAD kinase 1</fullName>
        <ecNumber evidence="1">2.7.1.23</ecNumber>
    </recommendedName>
    <alternativeName>
        <fullName evidence="1">ATP-dependent NAD kinase 1</fullName>
    </alternativeName>
</protein>
<evidence type="ECO:0000255" key="1">
    <source>
        <dbReference type="HAMAP-Rule" id="MF_00361"/>
    </source>
</evidence>
<reference key="1">
    <citation type="journal article" date="2002" name="Nucleic Acids Res.">
        <title>Genome sequence of Oceanobacillus iheyensis isolated from the Iheya Ridge and its unexpected adaptive capabilities to extreme environments.</title>
        <authorList>
            <person name="Takami H."/>
            <person name="Takaki Y."/>
            <person name="Uchiyama I."/>
        </authorList>
    </citation>
    <scope>NUCLEOTIDE SEQUENCE [LARGE SCALE GENOMIC DNA]</scope>
    <source>
        <strain>DSM 14371 / CIP 107618 / JCM 11309 / KCTC 3954 / HTE831</strain>
    </source>
</reference>
<sequence>MNFKIVSKGDDRSEKIKAMMRQYLSEFGLTYDKETPDLVISVGGDGTFLEAFHRYVHRLEDTAFIGIHTGHLGFYTDWTPKDVERLIIEIAKTPFQTVEYPLLEVIIRAKAGGKEDRILALNEAMIKTADGSSVVFDVEIKGEHFETFRGDGICISTPSGSTAYNKALGGAILHPSLEAIQITENASINNRVFRTIGSPLILPKHHTCFLKPMVDSSFLIQIDHFTKNYQNVKSIQCRVAKEKVRFARFKQFPFWNRVRDSFVSEEG</sequence>
<keyword id="KW-0067">ATP-binding</keyword>
<keyword id="KW-0963">Cytoplasm</keyword>
<keyword id="KW-0418">Kinase</keyword>
<keyword id="KW-0520">NAD</keyword>
<keyword id="KW-0521">NADP</keyword>
<keyword id="KW-0547">Nucleotide-binding</keyword>
<keyword id="KW-1185">Reference proteome</keyword>
<keyword id="KW-0808">Transferase</keyword>